<gene>
    <name type="primary">PEP1</name>
    <name type="synonym">VPS10</name>
    <name type="synonym">VPT1</name>
    <name type="ORF">SCRG_02979</name>
</gene>
<feature type="signal peptide" evidence="2">
    <location>
        <begin position="1"/>
        <end position="21"/>
    </location>
</feature>
<feature type="chain" id="PRO_0000407543" description="Vacuolar protein sorting/targeting protein PEP1">
    <location>
        <begin position="22"/>
        <end position="1577"/>
    </location>
</feature>
<feature type="topological domain" description="Lumenal" evidence="2">
    <location>
        <begin position="22"/>
        <end position="1391"/>
    </location>
</feature>
<feature type="transmembrane region" description="Helical" evidence="2">
    <location>
        <begin position="1392"/>
        <end position="1412"/>
    </location>
</feature>
<feature type="topological domain" description="Cytoplasmic" evidence="2">
    <location>
        <begin position="1413"/>
        <end position="1577"/>
    </location>
</feature>
<feature type="repeat" description="BNR 1">
    <location>
        <begin position="58"/>
        <end position="68"/>
    </location>
</feature>
<feature type="repeat" description="BNR 2">
    <location>
        <begin position="101"/>
        <end position="111"/>
    </location>
</feature>
<feature type="repeat" description="BNR 3">
    <location>
        <begin position="179"/>
        <end position="187"/>
    </location>
</feature>
<feature type="repeat" description="BNR 4">
    <location>
        <begin position="414"/>
        <end position="423"/>
    </location>
</feature>
<feature type="repeat" description="BNR 5">
    <location>
        <begin position="485"/>
        <end position="495"/>
    </location>
</feature>
<feature type="repeat" description="BNR 6">
    <location>
        <begin position="531"/>
        <end position="541"/>
    </location>
</feature>
<feature type="repeat" description="BNR 7">
    <location>
        <begin position="762"/>
        <end position="771"/>
    </location>
</feature>
<feature type="repeat" description="BNR 8">
    <location>
        <begin position="859"/>
        <end position="869"/>
    </location>
</feature>
<feature type="repeat" description="BNR 9">
    <location>
        <begin position="1141"/>
        <end position="1150"/>
    </location>
</feature>
<feature type="repeat" description="BNR 10">
    <location>
        <begin position="1183"/>
        <end position="1192"/>
    </location>
</feature>
<feature type="region of interest" description="Disordered" evidence="3">
    <location>
        <begin position="1531"/>
        <end position="1577"/>
    </location>
</feature>
<feature type="glycosylation site" description="N-linked (GlcNAc...) asparagine" evidence="2">
    <location>
        <position position="121"/>
    </location>
</feature>
<feature type="glycosylation site" description="N-linked (GlcNAc...) asparagine" evidence="2">
    <location>
        <position position="168"/>
    </location>
</feature>
<feature type="glycosylation site" description="N-linked (GlcNAc...) asparagine" evidence="2">
    <location>
        <position position="445"/>
    </location>
</feature>
<feature type="glycosylation site" description="N-linked (GlcNAc...) asparagine" evidence="2">
    <location>
        <position position="791"/>
    </location>
</feature>
<feature type="glycosylation site" description="N-linked (GlcNAc...) asparagine" evidence="2">
    <location>
        <position position="1008"/>
    </location>
</feature>
<feature type="glycosylation site" description="N-linked (GlcNAc...) asparagine" evidence="2">
    <location>
        <position position="1301"/>
    </location>
</feature>
<accession>B3LNF5</accession>
<protein>
    <recommendedName>
        <fullName>Vacuolar protein sorting/targeting protein PEP1</fullName>
    </recommendedName>
    <alternativeName>
        <fullName>Carboxypeptidase Y receptor</fullName>
        <shortName>CPY receptor</shortName>
    </alternativeName>
    <alternativeName>
        <fullName>Carboxypeptidase Y-deficient protein 1</fullName>
    </alternativeName>
    <alternativeName>
        <fullName>Sortilin VPS10</fullName>
    </alternativeName>
    <alternativeName>
        <fullName>Vacuolar carboxypeptidase sorting receptor VPS10</fullName>
    </alternativeName>
    <alternativeName>
        <fullName>Vacuolar protein sorting-associated protein 10</fullName>
    </alternativeName>
    <alternativeName>
        <fullName>Vacuolar protein-targeting protein 1</fullName>
    </alternativeName>
</protein>
<reference key="1">
    <citation type="submission" date="2005-03" db="EMBL/GenBank/DDBJ databases">
        <title>Annotation of the Saccharomyces cerevisiae RM11-1a genome.</title>
        <authorList>
            <consortium name="The Broad Institute Genome Sequencing Platform"/>
            <person name="Birren B.W."/>
            <person name="Lander E.S."/>
            <person name="Galagan J.E."/>
            <person name="Nusbaum C."/>
            <person name="Devon K."/>
            <person name="Cuomo C."/>
            <person name="Jaffe D.B."/>
            <person name="Butler J."/>
            <person name="Alvarez P."/>
            <person name="Gnerre S."/>
            <person name="Grabherr M."/>
            <person name="Kleber M."/>
            <person name="Mauceli E.W."/>
            <person name="Brockman W."/>
            <person name="MacCallum I.A."/>
            <person name="Rounsley S."/>
            <person name="Young S.K."/>
            <person name="LaButti K."/>
            <person name="Pushparaj V."/>
            <person name="DeCaprio D."/>
            <person name="Crawford M."/>
            <person name="Koehrsen M."/>
            <person name="Engels R."/>
            <person name="Montgomery P."/>
            <person name="Pearson M."/>
            <person name="Howarth C."/>
            <person name="Larson L."/>
            <person name="Luoma S."/>
            <person name="White J."/>
            <person name="O'Leary S."/>
            <person name="Kodira C.D."/>
            <person name="Zeng Q."/>
            <person name="Yandava C."/>
            <person name="Alvarado L."/>
            <person name="Pratt S."/>
            <person name="Kruglyak L."/>
        </authorList>
    </citation>
    <scope>NUCLEOTIDE SEQUENCE [LARGE SCALE GENOMIC DNA]</scope>
    <source>
        <strain>RM11-1a</strain>
    </source>
</reference>
<evidence type="ECO:0000250" key="1"/>
<evidence type="ECO:0000255" key="2"/>
<evidence type="ECO:0000256" key="3">
    <source>
        <dbReference type="SAM" id="MobiDB-lite"/>
    </source>
</evidence>
<evidence type="ECO:0000305" key="4"/>
<comment type="function">
    <text evidence="1">Functions as a sorting receptor in the Golgi compartment required for the intracellular sorting and delivery of soluble vacuolar proteins, like carboxypeptidase Y (CPY) and proteinase A. Executes multiple rounds of sorting by cycling between the late Golgi and a prevacuolar endosome-like compartment. Binds the Golgi-modified P2 form of CPY, and this interaction is dependent on the presence of an intact CPY vacuolar protein sorting signal (By similarity).</text>
</comment>
<comment type="subcellular location">
    <subcellularLocation>
        <location evidence="1">Golgi apparatus</location>
        <location evidence="1">trans-Golgi network membrane</location>
        <topology evidence="1">Single-pass type I membrane protein</topology>
    </subcellularLocation>
    <subcellularLocation>
        <location evidence="1">Prevacuolar compartment membrane</location>
        <topology evidence="1">Single-pass type I membrane protein</topology>
    </subcellularLocation>
    <text evidence="1">Cycles between the Golgi apparatus and the prevacuolar compartment.</text>
</comment>
<comment type="similarity">
    <text evidence="4">Belongs to the VPS10-related sortilin family.</text>
</comment>
<dbReference type="EMBL" id="CH408048">
    <property type="protein sequence ID" value="EDV12108.1"/>
    <property type="molecule type" value="Genomic_DNA"/>
</dbReference>
<dbReference type="SMR" id="B3LNF5"/>
<dbReference type="GlyCosmos" id="B3LNF5">
    <property type="glycosylation" value="6 sites, No reported glycans"/>
</dbReference>
<dbReference type="HOGENOM" id="CLU_000700_0_1_1"/>
<dbReference type="OrthoDB" id="9248at4893"/>
<dbReference type="Proteomes" id="UP000008335">
    <property type="component" value="Unassembled WGS sequence"/>
</dbReference>
<dbReference type="GO" id="GO:0005829">
    <property type="term" value="C:cytosol"/>
    <property type="evidence" value="ECO:0007669"/>
    <property type="project" value="GOC"/>
</dbReference>
<dbReference type="GO" id="GO:0005794">
    <property type="term" value="C:Golgi apparatus"/>
    <property type="evidence" value="ECO:0007669"/>
    <property type="project" value="UniProtKB-SubCell"/>
</dbReference>
<dbReference type="GO" id="GO:0016020">
    <property type="term" value="C:membrane"/>
    <property type="evidence" value="ECO:0007669"/>
    <property type="project" value="UniProtKB-KW"/>
</dbReference>
<dbReference type="GO" id="GO:0006895">
    <property type="term" value="P:Golgi to endosome transport"/>
    <property type="evidence" value="ECO:0007669"/>
    <property type="project" value="TreeGrafter"/>
</dbReference>
<dbReference type="GO" id="GO:0006896">
    <property type="term" value="P:Golgi to vacuole transport"/>
    <property type="evidence" value="ECO:0007669"/>
    <property type="project" value="TreeGrafter"/>
</dbReference>
<dbReference type="GO" id="GO:0006623">
    <property type="term" value="P:protein targeting to vacuole"/>
    <property type="evidence" value="ECO:0007669"/>
    <property type="project" value="TreeGrafter"/>
</dbReference>
<dbReference type="CDD" id="cd15482">
    <property type="entry name" value="Sialidase_non-viral"/>
    <property type="match status" value="2"/>
</dbReference>
<dbReference type="FunFam" id="3.30.60.270:FF:000005">
    <property type="entry name" value="Sortilin"/>
    <property type="match status" value="1"/>
</dbReference>
<dbReference type="FunFam" id="2.130.10.10:FF:001564">
    <property type="entry name" value="Vacuolar protein sorting/targeting protein PEP1"/>
    <property type="match status" value="1"/>
</dbReference>
<dbReference type="FunFam" id="3.30.60.270:FF:000008">
    <property type="entry name" value="Vacuolar protein sorting/targeting protein PEP1"/>
    <property type="match status" value="1"/>
</dbReference>
<dbReference type="FunFam" id="2.130.10.10:FF:000998">
    <property type="entry name" value="VPS10 homolog 2"/>
    <property type="match status" value="1"/>
</dbReference>
<dbReference type="Gene3D" id="2.10.70.80">
    <property type="match status" value="1"/>
</dbReference>
<dbReference type="Gene3D" id="2.120.10.10">
    <property type="match status" value="1"/>
</dbReference>
<dbReference type="Gene3D" id="3.30.60.270">
    <property type="match status" value="2"/>
</dbReference>
<dbReference type="Gene3D" id="2.130.10.10">
    <property type="entry name" value="YVTN repeat-like/Quinoprotein amine dehydrogenase"/>
    <property type="match status" value="3"/>
</dbReference>
<dbReference type="InterPro" id="IPR036278">
    <property type="entry name" value="Sialidase_sf"/>
</dbReference>
<dbReference type="InterPro" id="IPR031777">
    <property type="entry name" value="Sortilin_C"/>
</dbReference>
<dbReference type="InterPro" id="IPR031778">
    <property type="entry name" value="Sortilin_N"/>
</dbReference>
<dbReference type="InterPro" id="IPR006581">
    <property type="entry name" value="VPS10"/>
</dbReference>
<dbReference type="InterPro" id="IPR050310">
    <property type="entry name" value="VPS10-sortilin"/>
</dbReference>
<dbReference type="InterPro" id="IPR015943">
    <property type="entry name" value="WD40/YVTN_repeat-like_dom_sf"/>
</dbReference>
<dbReference type="PANTHER" id="PTHR12106">
    <property type="entry name" value="SORTILIN RELATED"/>
    <property type="match status" value="1"/>
</dbReference>
<dbReference type="PANTHER" id="PTHR12106:SF27">
    <property type="entry name" value="SORTILIN-RELATED RECEPTOR"/>
    <property type="match status" value="1"/>
</dbReference>
<dbReference type="Pfam" id="PF15902">
    <property type="entry name" value="Sortilin-Vps10"/>
    <property type="match status" value="2"/>
</dbReference>
<dbReference type="Pfam" id="PF15901">
    <property type="entry name" value="Sortilin_C"/>
    <property type="match status" value="2"/>
</dbReference>
<dbReference type="SMART" id="SM00602">
    <property type="entry name" value="VPS10"/>
    <property type="match status" value="2"/>
</dbReference>
<dbReference type="SUPFAM" id="SSF110296">
    <property type="entry name" value="Oligoxyloglucan reducing end-specific cellobiohydrolase"/>
    <property type="match status" value="2"/>
</dbReference>
<dbReference type="SUPFAM" id="SSF50939">
    <property type="entry name" value="Sialidases"/>
    <property type="match status" value="1"/>
</dbReference>
<sequence>MILLHFVYSLWALLLIPLINAEEFTPKVTKTIAQDSFEILSFDDSNTLIRKQDASVTISFDDGETWEKVEGIEDEITWIYIDPFNRHDRAVATSMYESRLYITNDQGKSWERITLPDSEKNISSRGCYIETHPLNKNYFLAKCNYCEKTEVDNEENSGDEEGAPVIFNITRCTDKVFASNDGGKSFSEIKSSLERNENSAISISDCGFAKTGKDSDLESSDTSIICLFQNMQLIMDEFSSPYTESKLVLTTDWGKSLKEFDQFKDKVVNGYRILKSHMVVITQGDRYNDMSSMDVWVSNDLSNFKMAYMPTQLRHSMQGEIYEDAMGRIILPMSRERSDQEEDKGIVSEILISDSQGLKFSPIPWTANEVFGYINLYQPTYLKGTMIASLYPLSRRRNRKGKAKGVKNKGVTKISVDNGLTWTVLKVVDPDNADSFDCDITDFENCSLQNMFYTREGSTPTAGILMTTGIVGDGSVFDWGDQRTFISRDGGLTWKLAFDFPCLYAVGDYGNVIVAIPYNADEDDDPQSEFYYSLDQGKTWTEYQLETTIYPNEVMNTTPDGSGAKFILNGFTLAHMDGTTNFIYAIDFSTAFNDKTCEENDFEDWNLAEGKCVNGVKYKIRRRKQDAQCLVKKVFEDLQLFETACDKCTEADYECAFEFVRDATGKCVPDYNLIVLSDVCDKTKKKTVPVKPLQLVKGDKCKKPMTVKSVDISCEGVPKKGTNDKEIVVTENKFDFKIQFYQYFDTVTDESLLMINSRGEAYISHDGGQTIRRFDSNGETIIEVVFNPYYNSSAYLFGSKGSIFSTHDRGYSFMTAKLPEARQLGMPLDFNAKAQDTFIYYGGKNCESILSPECHAVAYLTNDGGETFTEMLDNAIHCEFAGSLFKYPSNEDMVMCQVKEKSSQTRSLVSSTDFFQDDKNTVFENIIGYLSTGGYIIVAVPHENNELRAYVTIDGTEFAEAKFPYDEDVGKQEAFTILESEKGSIFLHLATNLVPGRDFGNLLKSNSNGTSFVTLEHAVNRNTFGYVDFEKIQGLEGIILTNIVSNSDKVAENKEDKQLKTKITFNEGSDWNFLKPPKRDSEGKKFSCSSKSLDECSLHLHGYTERKDIRDTYSSGSALGMMFGVGNVGPNLLPYKECSTFFTTDGGETWAEVKKTPHQWEYGDHGGILVLVPENSETDSISYSTDFGKTWKDYKFCADKVLVKDITTVPRDSALRFLLFGEAADIGGSSFRTYTIDFRNIFERQCDFDITGKESADYKYSPLSSKSNCLFGHQTEFLRKTDENCFIGNIPLSEFSRNIKNCSCTRQDFECDYNFYKANDGTCKLVKGLSPANAADVCKKEPDLIEYFESSGYRKIPLSTCEGGLKLDAPSSPHACPGKEKEFKEKYSVSAGPFAFIFISILLIIFFAAWFVYDRGIRRNGGFARFGEIRLGDDGLIENNNTDRVVNNIVKSGFYVFSNIGSLLQHTKTNIAHVISKIRGRFGNRTGPSYSSLIHDQFLDEADDLLAGHDEDANDLSSFMDQGSNFEIEEDDVPTLEEEHTSYTDQPTTTDVPDALPEGNEENIDRPDSTAPSNENQ</sequence>
<keyword id="KW-0325">Glycoprotein</keyword>
<keyword id="KW-0333">Golgi apparatus</keyword>
<keyword id="KW-0472">Membrane</keyword>
<keyword id="KW-0653">Protein transport</keyword>
<keyword id="KW-0675">Receptor</keyword>
<keyword id="KW-0677">Repeat</keyword>
<keyword id="KW-0732">Signal</keyword>
<keyword id="KW-0812">Transmembrane</keyword>
<keyword id="KW-1133">Transmembrane helix</keyword>
<keyword id="KW-0813">Transport</keyword>
<proteinExistence type="inferred from homology"/>
<name>VPS10_YEAS1</name>
<organism>
    <name type="scientific">Saccharomyces cerevisiae (strain RM11-1a)</name>
    <name type="common">Baker's yeast</name>
    <dbReference type="NCBI Taxonomy" id="285006"/>
    <lineage>
        <taxon>Eukaryota</taxon>
        <taxon>Fungi</taxon>
        <taxon>Dikarya</taxon>
        <taxon>Ascomycota</taxon>
        <taxon>Saccharomycotina</taxon>
        <taxon>Saccharomycetes</taxon>
        <taxon>Saccharomycetales</taxon>
        <taxon>Saccharomycetaceae</taxon>
        <taxon>Saccharomyces</taxon>
    </lineage>
</organism>